<accession>Q24K03</accession>
<gene>
    <name type="primary">THUMPD1</name>
</gene>
<dbReference type="EMBL" id="BC114098">
    <property type="protein sequence ID" value="AAI14099.1"/>
    <property type="molecule type" value="mRNA"/>
</dbReference>
<dbReference type="RefSeq" id="NP_001039742.1">
    <property type="nucleotide sequence ID" value="NM_001046277.1"/>
</dbReference>
<dbReference type="SMR" id="Q24K03"/>
<dbReference type="FunCoup" id="Q24K03">
    <property type="interactions" value="4425"/>
</dbReference>
<dbReference type="STRING" id="9913.ENSBTAP00000054288"/>
<dbReference type="iPTMnet" id="Q24K03"/>
<dbReference type="PaxDb" id="9913-ENSBTAP00000054288"/>
<dbReference type="GeneID" id="524854"/>
<dbReference type="KEGG" id="bta:524854"/>
<dbReference type="CTD" id="55623"/>
<dbReference type="VEuPathDB" id="HostDB:ENSBTAG00000047673"/>
<dbReference type="eggNOG" id="KOG3943">
    <property type="taxonomic scope" value="Eukaryota"/>
</dbReference>
<dbReference type="HOGENOM" id="CLU_039352_0_0_1"/>
<dbReference type="InParanoid" id="Q24K03"/>
<dbReference type="OMA" id="MNEKACV"/>
<dbReference type="OrthoDB" id="367221at2759"/>
<dbReference type="TreeFam" id="TF313884"/>
<dbReference type="Proteomes" id="UP000009136">
    <property type="component" value="Chromosome 25"/>
</dbReference>
<dbReference type="Bgee" id="ENSBTAG00000047673">
    <property type="expression patterns" value="Expressed in conceptus and 109 other cell types or tissues"/>
</dbReference>
<dbReference type="GO" id="GO:0003723">
    <property type="term" value="F:RNA binding"/>
    <property type="evidence" value="ECO:0000318"/>
    <property type="project" value="GO_Central"/>
</dbReference>
<dbReference type="GO" id="GO:0006400">
    <property type="term" value="P:tRNA modification"/>
    <property type="evidence" value="ECO:0000318"/>
    <property type="project" value="GO_Central"/>
</dbReference>
<dbReference type="CDD" id="cd11717">
    <property type="entry name" value="THUMP_THUMPD1_like"/>
    <property type="match status" value="1"/>
</dbReference>
<dbReference type="FunFam" id="3.30.2300.10:FF:000001">
    <property type="entry name" value="THUMP domain-containing protein 1"/>
    <property type="match status" value="1"/>
</dbReference>
<dbReference type="Gene3D" id="3.30.2300.10">
    <property type="entry name" value="THUMP superfamily"/>
    <property type="match status" value="1"/>
</dbReference>
<dbReference type="InterPro" id="IPR004114">
    <property type="entry name" value="THUMP_dom"/>
</dbReference>
<dbReference type="InterPro" id="IPR040183">
    <property type="entry name" value="THUMPD1-like"/>
</dbReference>
<dbReference type="PANTHER" id="PTHR13452">
    <property type="entry name" value="THUMP DOMAIN CONTAINING PROTEIN 1-RELATED"/>
    <property type="match status" value="1"/>
</dbReference>
<dbReference type="PANTHER" id="PTHR13452:SF10">
    <property type="entry name" value="THUMP DOMAIN-CONTAINING PROTEIN 1"/>
    <property type="match status" value="1"/>
</dbReference>
<dbReference type="Pfam" id="PF02926">
    <property type="entry name" value="THUMP"/>
    <property type="match status" value="1"/>
</dbReference>
<dbReference type="SMART" id="SM00981">
    <property type="entry name" value="THUMP"/>
    <property type="match status" value="1"/>
</dbReference>
<dbReference type="SUPFAM" id="SSF143437">
    <property type="entry name" value="THUMP domain-like"/>
    <property type="match status" value="1"/>
</dbReference>
<dbReference type="PROSITE" id="PS51165">
    <property type="entry name" value="THUMP"/>
    <property type="match status" value="1"/>
</dbReference>
<comment type="function">
    <text evidence="2">Functions as a tRNA-binding adapter to mediate NAT10-dependent tRNA acetylation modifying cytidine to N4-acetylcytidine (ac4C).</text>
</comment>
<comment type="subunit">
    <text evidence="2">Interacts with NAT10. Binds tRNA.</text>
</comment>
<comment type="similarity">
    <text evidence="5">Belongs to the THUMPD1 family.</text>
</comment>
<name>THUM1_BOVIN</name>
<protein>
    <recommendedName>
        <fullName>THUMP domain-containing protein 1</fullName>
    </recommendedName>
</protein>
<evidence type="ECO:0000250" key="1">
    <source>
        <dbReference type="UniProtKB" id="Q99J36"/>
    </source>
</evidence>
<evidence type="ECO:0000250" key="2">
    <source>
        <dbReference type="UniProtKB" id="Q9NXG2"/>
    </source>
</evidence>
<evidence type="ECO:0000255" key="3">
    <source>
        <dbReference type="PROSITE-ProRule" id="PRU00529"/>
    </source>
</evidence>
<evidence type="ECO:0000256" key="4">
    <source>
        <dbReference type="SAM" id="MobiDB-lite"/>
    </source>
</evidence>
<evidence type="ECO:0000305" key="5"/>
<proteinExistence type="evidence at transcript level"/>
<reference key="1">
    <citation type="submission" date="2006-02" db="EMBL/GenBank/DDBJ databases">
        <authorList>
            <consortium name="NIH - Mammalian Gene Collection (MGC) project"/>
        </authorList>
    </citation>
    <scope>NUCLEOTIDE SEQUENCE [LARGE SCALE MRNA]</scope>
    <source>
        <strain>Hereford</strain>
        <tissue>Hypothalamus</tissue>
    </source>
</reference>
<sequence>MAARIQQSPQPGGGKRKGKAQYVQAKRARRWDGGGPRQLEPGIQGILITCNMNERKCVEEAYSLLNEYGDDMYGPEKFADKDQQPSGSEGEDDDVEAALKKEVGDIKASTEMRLRRFQSVESGANNVVFIRTLGIEPEKLVHHILQDIYKTKKKKTRVILRMLPISGTCKAFLEDMKKYAETFLEPWFKAPNKGTFQIVYKSRNNSHMNREEVIKELAGIVGSLNSENKVDLSNPQYTVVVEIIKAVCCLSVVKDYMLFRKYNLQEVVKSAKDLSQLNPKQAAQTGNGKEAKLESGDKSSQNDPAEGKNNQQVVPENSEELGPTESISETHVVNEGVAKPELASQVTEGSESNENDL</sequence>
<keyword id="KW-0007">Acetylation</keyword>
<keyword id="KW-0597">Phosphoprotein</keyword>
<keyword id="KW-1185">Reference proteome</keyword>
<feature type="initiator methionine" description="Removed" evidence="2">
    <location>
        <position position="1"/>
    </location>
</feature>
<feature type="chain" id="PRO_0000244378" description="THUMP domain-containing protein 1">
    <location>
        <begin position="2"/>
        <end position="357"/>
    </location>
</feature>
<feature type="domain" description="THUMP" evidence="3">
    <location>
        <begin position="147"/>
        <end position="254"/>
    </location>
</feature>
<feature type="region of interest" description="Disordered" evidence="4">
    <location>
        <begin position="1"/>
        <end position="38"/>
    </location>
</feature>
<feature type="region of interest" description="Disordered" evidence="4">
    <location>
        <begin position="74"/>
        <end position="95"/>
    </location>
</feature>
<feature type="region of interest" description="Disordered" evidence="4">
    <location>
        <begin position="276"/>
        <end position="357"/>
    </location>
</feature>
<feature type="compositionally biased region" description="Polar residues" evidence="4">
    <location>
        <begin position="1"/>
        <end position="10"/>
    </location>
</feature>
<feature type="compositionally biased region" description="Polar residues" evidence="4">
    <location>
        <begin position="276"/>
        <end position="287"/>
    </location>
</feature>
<feature type="compositionally biased region" description="Polar residues" evidence="4">
    <location>
        <begin position="298"/>
        <end position="315"/>
    </location>
</feature>
<feature type="modified residue" description="N-acetylalanine" evidence="2">
    <location>
        <position position="2"/>
    </location>
</feature>
<feature type="modified residue" description="Phosphoserine" evidence="1">
    <location>
        <position position="8"/>
    </location>
</feature>
<feature type="modified residue" description="Phosphoserine" evidence="2">
    <location>
        <position position="86"/>
    </location>
</feature>
<feature type="modified residue" description="Phosphoserine" evidence="2">
    <location>
        <position position="88"/>
    </location>
</feature>
<feature type="modified residue" description="Phosphoserine" evidence="2">
    <location>
        <position position="119"/>
    </location>
</feature>
<feature type="modified residue" description="Phosphoserine" evidence="2">
    <location>
        <position position="270"/>
    </location>
</feature>
<organism>
    <name type="scientific">Bos taurus</name>
    <name type="common">Bovine</name>
    <dbReference type="NCBI Taxonomy" id="9913"/>
    <lineage>
        <taxon>Eukaryota</taxon>
        <taxon>Metazoa</taxon>
        <taxon>Chordata</taxon>
        <taxon>Craniata</taxon>
        <taxon>Vertebrata</taxon>
        <taxon>Euteleostomi</taxon>
        <taxon>Mammalia</taxon>
        <taxon>Eutheria</taxon>
        <taxon>Laurasiatheria</taxon>
        <taxon>Artiodactyla</taxon>
        <taxon>Ruminantia</taxon>
        <taxon>Pecora</taxon>
        <taxon>Bovidae</taxon>
        <taxon>Bovinae</taxon>
        <taxon>Bos</taxon>
    </lineage>
</organism>